<name>PMA1_NICPL</name>
<organism>
    <name type="scientific">Nicotiana plumbaginifolia</name>
    <name type="common">Leadwort-leaved tobacco</name>
    <name type="synonym">Tex-Mex tobacco</name>
    <dbReference type="NCBI Taxonomy" id="4092"/>
    <lineage>
        <taxon>Eukaryota</taxon>
        <taxon>Viridiplantae</taxon>
        <taxon>Streptophyta</taxon>
        <taxon>Embryophyta</taxon>
        <taxon>Tracheophyta</taxon>
        <taxon>Spermatophyta</taxon>
        <taxon>Magnoliopsida</taxon>
        <taxon>eudicotyledons</taxon>
        <taxon>Gunneridae</taxon>
        <taxon>Pentapetalae</taxon>
        <taxon>asterids</taxon>
        <taxon>lamiids</taxon>
        <taxon>Solanales</taxon>
        <taxon>Solanaceae</taxon>
        <taxon>Nicotianoideae</taxon>
        <taxon>Nicotianeae</taxon>
        <taxon>Nicotiana</taxon>
    </lineage>
</organism>
<accession>Q08435</accession>
<protein>
    <recommendedName>
        <fullName>Plasma membrane ATPase 1</fullName>
        <ecNumber>7.1.2.1</ecNumber>
    </recommendedName>
    <alternativeName>
        <fullName>Proton pump 1</fullName>
    </alternativeName>
</protein>
<gene>
    <name type="primary">PMA1</name>
</gene>
<comment type="function">
    <text>The plasma membrane ATPase of plants and fungi is a hydrogen ion pump. The proton gradient it generates drives the active transport of nutrients by H(+)-symport. The resulting external acidification and/or internal alkinization may mediate growth responses.</text>
</comment>
<comment type="catalytic activity">
    <reaction>
        <text>ATP + H2O + H(+)(in) = ADP + phosphate + 2 H(+)(out)</text>
        <dbReference type="Rhea" id="RHEA:20852"/>
        <dbReference type="ChEBI" id="CHEBI:15377"/>
        <dbReference type="ChEBI" id="CHEBI:15378"/>
        <dbReference type="ChEBI" id="CHEBI:30616"/>
        <dbReference type="ChEBI" id="CHEBI:43474"/>
        <dbReference type="ChEBI" id="CHEBI:456216"/>
        <dbReference type="EC" id="7.1.2.1"/>
    </reaction>
</comment>
<comment type="subcellular location">
    <subcellularLocation>
        <location>Cell membrane</location>
        <topology>Multi-pass membrane protein</topology>
    </subcellularLocation>
</comment>
<comment type="tissue specificity">
    <text>Expressed in roots, stems, leaves from both vegetative and flowering plants, and flowers at early and late stages of development with highest expression levels found in flowers and stem.</text>
</comment>
<comment type="similarity">
    <text evidence="3">Belongs to the cation transport ATPase (P-type) (TC 3.A.3) family. Type IIIA subfamily.</text>
</comment>
<keyword id="KW-0067">ATP-binding</keyword>
<keyword id="KW-1003">Cell membrane</keyword>
<keyword id="KW-0375">Hydrogen ion transport</keyword>
<keyword id="KW-0406">Ion transport</keyword>
<keyword id="KW-0460">Magnesium</keyword>
<keyword id="KW-0472">Membrane</keyword>
<keyword id="KW-0479">Metal-binding</keyword>
<keyword id="KW-0547">Nucleotide-binding</keyword>
<keyword id="KW-0597">Phosphoprotein</keyword>
<keyword id="KW-1278">Translocase</keyword>
<keyword id="KW-0812">Transmembrane</keyword>
<keyword id="KW-1133">Transmembrane helix</keyword>
<keyword id="KW-0813">Transport</keyword>
<reference key="1">
    <citation type="journal article" date="1992" name="J. Biol. Chem.">
        <title>Differential expression within a three-gene subfamily encoding a plasma membrane H(+)-ATPase in Nicotiana plumbaginifolia.</title>
        <authorList>
            <person name="Perez C."/>
            <person name="Michelet B."/>
            <person name="Ferrant V."/>
            <person name="Bogaerts P."/>
            <person name="Boutry M."/>
        </authorList>
    </citation>
    <scope>NUCLEOTIDE SEQUENCE [GENOMIC DNA]</scope>
    <source>
        <tissue>Root</tissue>
    </source>
</reference>
<proteinExistence type="evidence at transcript level"/>
<sequence>MGEEKPEVLDAVLKEAVDLENIPIEEVFENLRCTKEGLTATAAQERLAIFGYNKLEEKKDSKLLKFLGFMWNPLSWVMEAAAIMAIALANGGGKPPDWQDFVGIITLLIINSTISFIEENNAGNAAAALMARLAPKAKVLRDGRWKEEDAAVLVPGDIISIKLGDIIPADARLLEGDPLKIDQSALTGESLPVTKGPGDGVYSGSTCKQGEIEAIVIATGVHTFFGKAAHLVDSTNQVGHFQKVLTAIGNFCICSIAVGMIIEIIVMYPIQHRAYRPGIDNLLVLLIGGIPIAMPTVLSVTMAIGSHRLAQQGAITKRMTAIEEMAGMDVLCSDKTGTLTLNKLTVDKNLIEVFAKGVDADMVVLMAARASRTENQDAIDAAIVGMLADPKEARAGIREIHFLPFNPTDKRTALTYLDGEGKMHRVSKGAPEQILNLAHNKSDIERRVHAVIDKFAERGLRSLGVAYQEVPEGRKESAGGPWQFIGLLPLFDPPRHDSAETIRRALNLGVNVKMVTGDQLAIGKETGRRLGMGTNMYPSSALLGQTKDESISALPIDELIEKADGFAGVFPEHKYEIVKRLQARKHICGMTGDGVNDAPALKKADIGIAVDDATDAARSASDIVLTEPGLSVIISAVLTSRAIFQRMKNYTIYAVSITIRIVLGFMLLALIWKFDFPPFMVLIIAILNDGTIMTISKDRVKPSPLPDSWKLAEIFTTGIVLGGYLAMMTVIFFWAAYKTNFFPHVFGVSTLEKTATDDFRKLASAIYLQVSIISQALIFVTRSRSWSFVERPGFLLVIAFVIAQLVATLIAVYANWSFAAIEGIGWGWAGVIWIYNLVFYIPLDIIKFFIRYALSGRAWDLVFERRIAFTRKKDFGKEQRELQWAHAQRTLHGLQVPDTKLFSEATNFNELNQLAEEAKRRAEIARLRELHTLKGHVESVVKLKGLDIETIQQAYTV</sequence>
<evidence type="ECO:0000250" key="1"/>
<evidence type="ECO:0000255" key="2"/>
<evidence type="ECO:0000305" key="3"/>
<feature type="chain" id="PRO_0000046291" description="Plasma membrane ATPase 1">
    <location>
        <begin position="1"/>
        <end position="957"/>
    </location>
</feature>
<feature type="topological domain" description="Cytoplasmic" evidence="2">
    <location>
        <begin position="1"/>
        <end position="66"/>
    </location>
</feature>
<feature type="transmembrane region" description="Helical; Name=1" evidence="2">
    <location>
        <begin position="67"/>
        <end position="86"/>
    </location>
</feature>
<feature type="topological domain" description="Extracellular" evidence="2">
    <location>
        <begin position="87"/>
        <end position="98"/>
    </location>
</feature>
<feature type="transmembrane region" description="Helical; Name=2" evidence="2">
    <location>
        <begin position="99"/>
        <end position="119"/>
    </location>
</feature>
<feature type="topological domain" description="Cytoplasmic" evidence="2">
    <location>
        <begin position="120"/>
        <end position="248"/>
    </location>
</feature>
<feature type="transmembrane region" description="Helical; Name=3" evidence="2">
    <location>
        <begin position="249"/>
        <end position="269"/>
    </location>
</feature>
<feature type="topological domain" description="Extracellular" evidence="2">
    <location>
        <begin position="270"/>
        <end position="279"/>
    </location>
</feature>
<feature type="transmembrane region" description="Helical; Name=4" evidence="2">
    <location>
        <begin position="280"/>
        <end position="301"/>
    </location>
</feature>
<feature type="topological domain" description="Cytoplasmic" evidence="2">
    <location>
        <begin position="302"/>
        <end position="648"/>
    </location>
</feature>
<feature type="transmembrane region" description="Helical; Name=5" evidence="2">
    <location>
        <begin position="649"/>
        <end position="670"/>
    </location>
</feature>
<feature type="topological domain" description="Extracellular" evidence="2">
    <location>
        <begin position="671"/>
        <end position="675"/>
    </location>
</feature>
<feature type="transmembrane region" description="Helical; Name=6" evidence="2">
    <location>
        <begin position="676"/>
        <end position="698"/>
    </location>
</feature>
<feature type="topological domain" description="Cytoplasmic" evidence="2">
    <location>
        <begin position="699"/>
        <end position="714"/>
    </location>
</feature>
<feature type="transmembrane region" description="Helical; Name=7" evidence="2">
    <location>
        <begin position="715"/>
        <end position="735"/>
    </location>
</feature>
<feature type="topological domain" description="Extracellular" evidence="2">
    <location>
        <begin position="736"/>
        <end position="760"/>
    </location>
</feature>
<feature type="transmembrane region" description="Helical; Name=8" evidence="2">
    <location>
        <begin position="761"/>
        <end position="781"/>
    </location>
</feature>
<feature type="topological domain" description="Cytoplasmic" evidence="2">
    <location>
        <begin position="782"/>
        <end position="793"/>
    </location>
</feature>
<feature type="transmembrane region" description="Helical; Name=9" evidence="2">
    <location>
        <begin position="794"/>
        <end position="814"/>
    </location>
</feature>
<feature type="topological domain" description="Extracellular" evidence="2">
    <location>
        <begin position="815"/>
        <end position="823"/>
    </location>
</feature>
<feature type="transmembrane region" description="Helical; Name=10" evidence="2">
    <location>
        <begin position="824"/>
        <end position="844"/>
    </location>
</feature>
<feature type="topological domain" description="Cytoplasmic" evidence="2">
    <location>
        <begin position="845"/>
        <end position="957"/>
    </location>
</feature>
<feature type="active site" description="4-aspartylphosphate intermediate" evidence="1">
    <location>
        <position position="334"/>
    </location>
</feature>
<feature type="binding site" evidence="1">
    <location>
        <position position="593"/>
    </location>
    <ligand>
        <name>Mg(2+)</name>
        <dbReference type="ChEBI" id="CHEBI:18420"/>
    </ligand>
</feature>
<feature type="binding site" evidence="1">
    <location>
        <position position="597"/>
    </location>
    <ligand>
        <name>Mg(2+)</name>
        <dbReference type="ChEBI" id="CHEBI:18420"/>
    </ligand>
</feature>
<dbReference type="EC" id="7.1.2.1"/>
<dbReference type="EMBL" id="M80489">
    <property type="protein sequence ID" value="AAA34094.1"/>
    <property type="molecule type" value="Genomic_DNA"/>
</dbReference>
<dbReference type="PIR" id="A41779">
    <property type="entry name" value="A41779"/>
</dbReference>
<dbReference type="SMR" id="Q08435"/>
<dbReference type="GO" id="GO:0005886">
    <property type="term" value="C:plasma membrane"/>
    <property type="evidence" value="ECO:0007669"/>
    <property type="project" value="UniProtKB-SubCell"/>
</dbReference>
<dbReference type="GO" id="GO:0005524">
    <property type="term" value="F:ATP binding"/>
    <property type="evidence" value="ECO:0007669"/>
    <property type="project" value="UniProtKB-KW"/>
</dbReference>
<dbReference type="GO" id="GO:0016887">
    <property type="term" value="F:ATP hydrolysis activity"/>
    <property type="evidence" value="ECO:0007669"/>
    <property type="project" value="InterPro"/>
</dbReference>
<dbReference type="GO" id="GO:0046872">
    <property type="term" value="F:metal ion binding"/>
    <property type="evidence" value="ECO:0007669"/>
    <property type="project" value="UniProtKB-KW"/>
</dbReference>
<dbReference type="GO" id="GO:0008553">
    <property type="term" value="F:P-type proton-exporting transporter activity"/>
    <property type="evidence" value="ECO:0007669"/>
    <property type="project" value="UniProtKB-EC"/>
</dbReference>
<dbReference type="GO" id="GO:0120029">
    <property type="term" value="P:proton export across plasma membrane"/>
    <property type="evidence" value="ECO:0007669"/>
    <property type="project" value="InterPro"/>
</dbReference>
<dbReference type="CDD" id="cd02076">
    <property type="entry name" value="P-type_ATPase_H"/>
    <property type="match status" value="1"/>
</dbReference>
<dbReference type="FunFam" id="1.20.1110.10:FF:000045">
    <property type="entry name" value="ATPase 4 plasma membrane-type"/>
    <property type="match status" value="1"/>
</dbReference>
<dbReference type="FunFam" id="2.70.150.10:FF:000004">
    <property type="entry name" value="Plasma membrane ATPase"/>
    <property type="match status" value="1"/>
</dbReference>
<dbReference type="FunFam" id="3.40.1110.10:FF:000004">
    <property type="entry name" value="Plasma membrane ATPase"/>
    <property type="match status" value="1"/>
</dbReference>
<dbReference type="FunFam" id="3.40.50.1000:FF:000211">
    <property type="entry name" value="Plasma membrane ATPase"/>
    <property type="match status" value="1"/>
</dbReference>
<dbReference type="Gene3D" id="6.10.140.890">
    <property type="match status" value="1"/>
</dbReference>
<dbReference type="Gene3D" id="3.40.1110.10">
    <property type="entry name" value="Calcium-transporting ATPase, cytoplasmic domain N"/>
    <property type="match status" value="1"/>
</dbReference>
<dbReference type="Gene3D" id="2.70.150.10">
    <property type="entry name" value="Calcium-transporting ATPase, cytoplasmic transduction domain A"/>
    <property type="match status" value="1"/>
</dbReference>
<dbReference type="Gene3D" id="1.20.1110.10">
    <property type="entry name" value="Calcium-transporting ATPase, transmembrane domain"/>
    <property type="match status" value="1"/>
</dbReference>
<dbReference type="Gene3D" id="3.40.50.1000">
    <property type="entry name" value="HAD superfamily/HAD-like"/>
    <property type="match status" value="1"/>
</dbReference>
<dbReference type="InterPro" id="IPR004014">
    <property type="entry name" value="ATPase_P-typ_cation-transptr_N"/>
</dbReference>
<dbReference type="InterPro" id="IPR023299">
    <property type="entry name" value="ATPase_P-typ_cyto_dom_N"/>
</dbReference>
<dbReference type="InterPro" id="IPR018303">
    <property type="entry name" value="ATPase_P-typ_P_site"/>
</dbReference>
<dbReference type="InterPro" id="IPR023298">
    <property type="entry name" value="ATPase_P-typ_TM_dom_sf"/>
</dbReference>
<dbReference type="InterPro" id="IPR008250">
    <property type="entry name" value="ATPase_P-typ_transduc_dom_A_sf"/>
</dbReference>
<dbReference type="InterPro" id="IPR036412">
    <property type="entry name" value="HAD-like_sf"/>
</dbReference>
<dbReference type="InterPro" id="IPR023214">
    <property type="entry name" value="HAD_sf"/>
</dbReference>
<dbReference type="InterPro" id="IPR006534">
    <property type="entry name" value="P-type_ATPase_IIIA"/>
</dbReference>
<dbReference type="InterPro" id="IPR001757">
    <property type="entry name" value="P_typ_ATPase"/>
</dbReference>
<dbReference type="InterPro" id="IPR044492">
    <property type="entry name" value="P_typ_ATPase_HD_dom"/>
</dbReference>
<dbReference type="NCBIfam" id="TIGR01647">
    <property type="entry name" value="ATPase-IIIA_H"/>
    <property type="match status" value="1"/>
</dbReference>
<dbReference type="NCBIfam" id="TIGR01494">
    <property type="entry name" value="ATPase_P-type"/>
    <property type="match status" value="2"/>
</dbReference>
<dbReference type="PANTHER" id="PTHR42861">
    <property type="entry name" value="CALCIUM-TRANSPORTING ATPASE"/>
    <property type="match status" value="1"/>
</dbReference>
<dbReference type="Pfam" id="PF00690">
    <property type="entry name" value="Cation_ATPase_N"/>
    <property type="match status" value="1"/>
</dbReference>
<dbReference type="Pfam" id="PF00122">
    <property type="entry name" value="E1-E2_ATPase"/>
    <property type="match status" value="1"/>
</dbReference>
<dbReference type="Pfam" id="PF00702">
    <property type="entry name" value="Hydrolase"/>
    <property type="match status" value="1"/>
</dbReference>
<dbReference type="PRINTS" id="PR00119">
    <property type="entry name" value="CATATPASE"/>
</dbReference>
<dbReference type="PRINTS" id="PR00120">
    <property type="entry name" value="HATPASE"/>
</dbReference>
<dbReference type="SFLD" id="SFLDS00003">
    <property type="entry name" value="Haloacid_Dehalogenase"/>
    <property type="match status" value="1"/>
</dbReference>
<dbReference type="SFLD" id="SFLDF00027">
    <property type="entry name" value="p-type_atpase"/>
    <property type="match status" value="1"/>
</dbReference>
<dbReference type="SMART" id="SM00831">
    <property type="entry name" value="Cation_ATPase_N"/>
    <property type="match status" value="1"/>
</dbReference>
<dbReference type="SUPFAM" id="SSF81653">
    <property type="entry name" value="Calcium ATPase, transduction domain A"/>
    <property type="match status" value="1"/>
</dbReference>
<dbReference type="SUPFAM" id="SSF81665">
    <property type="entry name" value="Calcium ATPase, transmembrane domain M"/>
    <property type="match status" value="1"/>
</dbReference>
<dbReference type="SUPFAM" id="SSF56784">
    <property type="entry name" value="HAD-like"/>
    <property type="match status" value="1"/>
</dbReference>
<dbReference type="PROSITE" id="PS00154">
    <property type="entry name" value="ATPASE_E1_E2"/>
    <property type="match status" value="1"/>
</dbReference>